<dbReference type="EC" id="2.1.3.15" evidence="2"/>
<dbReference type="EMBL" id="M81884">
    <property type="protein sequence ID" value="AAA65854.1"/>
    <property type="molecule type" value="Genomic_DNA"/>
</dbReference>
<dbReference type="PIR" id="S78384">
    <property type="entry name" value="S78384"/>
</dbReference>
<dbReference type="RefSeq" id="NP_054380.1">
    <property type="nucleotide sequence ID" value="NC_001568.1"/>
</dbReference>
<dbReference type="SMR" id="P30064"/>
<dbReference type="GeneID" id="801404"/>
<dbReference type="UniPathway" id="UPA00655">
    <property type="reaction ID" value="UER00711"/>
</dbReference>
<dbReference type="GO" id="GO:0009317">
    <property type="term" value="C:acetyl-CoA carboxylase complex"/>
    <property type="evidence" value="ECO:0007669"/>
    <property type="project" value="InterPro"/>
</dbReference>
<dbReference type="GO" id="GO:0009532">
    <property type="term" value="C:plastid stroma"/>
    <property type="evidence" value="ECO:0007669"/>
    <property type="project" value="UniProtKB-SubCell"/>
</dbReference>
<dbReference type="GO" id="GO:0003989">
    <property type="term" value="F:acetyl-CoA carboxylase activity"/>
    <property type="evidence" value="ECO:0007669"/>
    <property type="project" value="InterPro"/>
</dbReference>
<dbReference type="GO" id="GO:0005524">
    <property type="term" value="F:ATP binding"/>
    <property type="evidence" value="ECO:0007669"/>
    <property type="project" value="UniProtKB-KW"/>
</dbReference>
<dbReference type="GO" id="GO:0016743">
    <property type="term" value="F:carboxyl- or carbamoyltransferase activity"/>
    <property type="evidence" value="ECO:0007669"/>
    <property type="project" value="UniProtKB-UniRule"/>
</dbReference>
<dbReference type="GO" id="GO:0008270">
    <property type="term" value="F:zinc ion binding"/>
    <property type="evidence" value="ECO:0007669"/>
    <property type="project" value="UniProtKB-UniRule"/>
</dbReference>
<dbReference type="GO" id="GO:0006633">
    <property type="term" value="P:fatty acid biosynthetic process"/>
    <property type="evidence" value="ECO:0007669"/>
    <property type="project" value="UniProtKB-KW"/>
</dbReference>
<dbReference type="GO" id="GO:2001295">
    <property type="term" value="P:malonyl-CoA biosynthetic process"/>
    <property type="evidence" value="ECO:0007669"/>
    <property type="project" value="UniProtKB-UniRule"/>
</dbReference>
<dbReference type="Gene3D" id="3.90.226.10">
    <property type="entry name" value="2-enoyl-CoA Hydratase, Chain A, domain 1"/>
    <property type="match status" value="1"/>
</dbReference>
<dbReference type="HAMAP" id="MF_01395">
    <property type="entry name" value="AcetylCoA_CT_beta"/>
    <property type="match status" value="1"/>
</dbReference>
<dbReference type="InterPro" id="IPR034733">
    <property type="entry name" value="AcCoA_carboxyl_beta"/>
</dbReference>
<dbReference type="InterPro" id="IPR000438">
    <property type="entry name" value="Acetyl_CoA_COase_Trfase_b_su"/>
</dbReference>
<dbReference type="InterPro" id="IPR029045">
    <property type="entry name" value="ClpP/crotonase-like_dom_sf"/>
</dbReference>
<dbReference type="InterPro" id="IPR011762">
    <property type="entry name" value="COA_CT_N"/>
</dbReference>
<dbReference type="NCBIfam" id="TIGR00515">
    <property type="entry name" value="accD"/>
    <property type="match status" value="1"/>
</dbReference>
<dbReference type="PANTHER" id="PTHR42995">
    <property type="entry name" value="ACETYL-COENZYME A CARBOXYLASE CARBOXYL TRANSFERASE SUBUNIT BETA, CHLOROPLASTIC"/>
    <property type="match status" value="1"/>
</dbReference>
<dbReference type="PANTHER" id="PTHR42995:SF5">
    <property type="entry name" value="ACETYL-COENZYME A CARBOXYLASE CARBOXYL TRANSFERASE SUBUNIT BETA, CHLOROPLASTIC"/>
    <property type="match status" value="1"/>
</dbReference>
<dbReference type="Pfam" id="PF01039">
    <property type="entry name" value="Carboxyl_trans"/>
    <property type="match status" value="1"/>
</dbReference>
<dbReference type="PRINTS" id="PR01070">
    <property type="entry name" value="ACCCTRFRASEB"/>
</dbReference>
<dbReference type="SUPFAM" id="SSF52096">
    <property type="entry name" value="ClpP/crotonase"/>
    <property type="match status" value="1"/>
</dbReference>
<dbReference type="PROSITE" id="PS50980">
    <property type="entry name" value="COA_CT_NTER"/>
    <property type="match status" value="1"/>
</dbReference>
<evidence type="ECO:0000250" key="1"/>
<evidence type="ECO:0000255" key="2">
    <source>
        <dbReference type="HAMAP-Rule" id="MF_01395"/>
    </source>
</evidence>
<evidence type="ECO:0000255" key="3">
    <source>
        <dbReference type="PROSITE-ProRule" id="PRU01136"/>
    </source>
</evidence>
<organism>
    <name type="scientific">Epifagus virginiana</name>
    <name type="common">Beechdrops</name>
    <name type="synonym">Orobanche virginiana</name>
    <dbReference type="NCBI Taxonomy" id="4177"/>
    <lineage>
        <taxon>Eukaryota</taxon>
        <taxon>Viridiplantae</taxon>
        <taxon>Streptophyta</taxon>
        <taxon>Embryophyta</taxon>
        <taxon>Tracheophyta</taxon>
        <taxon>Spermatophyta</taxon>
        <taxon>Magnoliopsida</taxon>
        <taxon>eudicotyledons</taxon>
        <taxon>Gunneridae</taxon>
        <taxon>Pentapetalae</taxon>
        <taxon>asterids</taxon>
        <taxon>lamiids</taxon>
        <taxon>Lamiales</taxon>
        <taxon>Orobanchaceae</taxon>
        <taxon>Orobancheae</taxon>
        <taxon>Epifagus</taxon>
    </lineage>
</organism>
<protein>
    <recommendedName>
        <fullName evidence="2">Acetyl-coenzyme A carboxylase carboxyl transferase subunit beta</fullName>
        <shortName evidence="2">ACCase subunit beta</shortName>
        <shortName evidence="2">Acetyl-CoA carboxylase carboxyltransferase subunit beta</shortName>
        <ecNumber evidence="2">2.1.3.15</ecNumber>
    </recommendedName>
</protein>
<name>ACCD_EPIVI</name>
<reference key="1">
    <citation type="journal article" date="1992" name="Proc. Natl. Acad. Sci. U.S.A.">
        <title>Function and evolution of a minimal plastid genome from a nonphotosynthetic parasitic plant.</title>
        <authorList>
            <person name="Wolfe K.H."/>
            <person name="Morden C.W."/>
            <person name="Palmer J.D."/>
        </authorList>
    </citation>
    <scope>NUCLEOTIDE SEQUENCE [LARGE SCALE GENOMIC DNA]</scope>
</reference>
<reference key="2">
    <citation type="journal article" date="1992" name="J. Mol. Evol.">
        <title>Rapid evolution of the plastid translational apparatus in a nonphotosynthetic plant: loss or accelerated sequence evolution of tRNA and ribosomal protein genes.</title>
        <authorList>
            <person name="Wolfe K.H."/>
            <person name="Morden C.W."/>
            <person name="Ems S.C."/>
            <person name="Palmer J.D."/>
        </authorList>
    </citation>
    <scope>NUCLEOTIDE SEQUENCE [GENOMIC DNA]</scope>
</reference>
<sequence>MERWRFSLMVFNNKLKHEYGIKKSLDSVSSIENTIENKDSNSKPNIKGRAQNIRSCGGRDNYSYNNIIYLFGVEYNRNLIPNDTFLFRDNKGDSFYISFNIENHIFEIDINFSCLSELEIERYFYSYHGFDYFNFNNGSAIEDYLYNHYMYDTPSNNHITSCIESYLQSQICVNPSIISDSSDSYIFGCFDKRRTHNESRRSGIRNRAQSSYLTIRESFNNLDSTKKYKHLWVQCENCYGLNYKKFLKSKINLCEQCGYHFKMSSSERIEVLVDPDTWYPMDEDMSSLDPIEFHSEEEPYKDRIYSYQKRTGLTEAVQTGLGQLNGIPIAIGVMDFQFMGGSMGSVVGEKITRLIEYATNKILPLIIVCASGGARMQEGSLSLMQMAKISSALFDYQSNKKLLYVSILTSPTTGGVTASFGMLGDIIIAEPNSYIAFAGKRVIEQTLHKIVPEGSQAAEYLFQKGLFDLIIPRNLLKSVLGELFKLHAFFPLN</sequence>
<feature type="chain" id="PRO_0000199784" description="Acetyl-coenzyme A carboxylase carboxyl transferase subunit beta">
    <location>
        <begin position="1"/>
        <end position="493"/>
    </location>
</feature>
<feature type="domain" description="CoA carboxyltransferase N-terminal" evidence="3">
    <location>
        <begin position="231"/>
        <end position="493"/>
    </location>
</feature>
<feature type="zinc finger region" description="C4-type" evidence="2">
    <location>
        <begin position="235"/>
        <end position="257"/>
    </location>
</feature>
<feature type="binding site" evidence="2">
    <location>
        <position position="235"/>
    </location>
    <ligand>
        <name>Zn(2+)</name>
        <dbReference type="ChEBI" id="CHEBI:29105"/>
    </ligand>
</feature>
<feature type="binding site" evidence="2">
    <location>
        <position position="238"/>
    </location>
    <ligand>
        <name>Zn(2+)</name>
        <dbReference type="ChEBI" id="CHEBI:29105"/>
    </ligand>
</feature>
<feature type="binding site" evidence="2">
    <location>
        <position position="254"/>
    </location>
    <ligand>
        <name>Zn(2+)</name>
        <dbReference type="ChEBI" id="CHEBI:29105"/>
    </ligand>
</feature>
<feature type="binding site" evidence="2">
    <location>
        <position position="257"/>
    </location>
    <ligand>
        <name>Zn(2+)</name>
        <dbReference type="ChEBI" id="CHEBI:29105"/>
    </ligand>
</feature>
<proteinExistence type="inferred from homology"/>
<keyword id="KW-0067">ATP-binding</keyword>
<keyword id="KW-0275">Fatty acid biosynthesis</keyword>
<keyword id="KW-0276">Fatty acid metabolism</keyword>
<keyword id="KW-0444">Lipid biosynthesis</keyword>
<keyword id="KW-0443">Lipid metabolism</keyword>
<keyword id="KW-0479">Metal-binding</keyword>
<keyword id="KW-0547">Nucleotide-binding</keyword>
<keyword id="KW-0934">Plastid</keyword>
<keyword id="KW-0808">Transferase</keyword>
<keyword id="KW-0862">Zinc</keyword>
<keyword id="KW-0863">Zinc-finger</keyword>
<comment type="function">
    <text evidence="2">Component of the acetyl coenzyme A carboxylase (ACC) complex. Biotin carboxylase (BC) catalyzes the carboxylation of biotin on its carrier protein (BCCP) and then the CO(2) group is transferred by the transcarboxylase to acetyl-CoA to form malonyl-CoA.</text>
</comment>
<comment type="catalytic activity">
    <reaction evidence="2">
        <text>N(6)-carboxybiotinyl-L-lysyl-[protein] + acetyl-CoA = N(6)-biotinyl-L-lysyl-[protein] + malonyl-CoA</text>
        <dbReference type="Rhea" id="RHEA:54728"/>
        <dbReference type="Rhea" id="RHEA-COMP:10505"/>
        <dbReference type="Rhea" id="RHEA-COMP:10506"/>
        <dbReference type="ChEBI" id="CHEBI:57288"/>
        <dbReference type="ChEBI" id="CHEBI:57384"/>
        <dbReference type="ChEBI" id="CHEBI:83144"/>
        <dbReference type="ChEBI" id="CHEBI:83145"/>
        <dbReference type="EC" id="2.1.3.15"/>
    </reaction>
</comment>
<comment type="cofactor">
    <cofactor evidence="2">
        <name>Zn(2+)</name>
        <dbReference type="ChEBI" id="CHEBI:29105"/>
    </cofactor>
    <text evidence="2">Binds 1 zinc ion per subunit.</text>
</comment>
<comment type="pathway">
    <text evidence="2">Lipid metabolism; malonyl-CoA biosynthesis; malonyl-CoA from acetyl-CoA: step 1/1.</text>
</comment>
<comment type="subunit">
    <text evidence="1">Acetyl-CoA carboxylase is a heterohexamer composed of biotin carboxyl carrier protein, biotin carboxylase and 2 subunits each of ACCase subunit alpha and ACCase plastid-coded subunit beta (accD).</text>
</comment>
<comment type="subcellular location">
    <subcellularLocation>
        <location evidence="1">Plastid stroma</location>
    </subcellularLocation>
</comment>
<comment type="similarity">
    <text evidence="2">Belongs to the AccD/PCCB family.</text>
</comment>
<accession>P30064</accession>
<gene>
    <name evidence="2" type="primary">accD</name>
    <name type="synonym">dedB</name>
    <name type="synonym">ycf11</name>
    <name type="synonym">zfpA</name>
</gene>
<geneLocation type="non-photosynthetic plastid"/>